<name>GRPE_CANGA</name>
<organism>
    <name type="scientific">Candida glabrata (strain ATCC 2001 / BCRC 20586 / JCM 3761 / NBRC 0622 / NRRL Y-65 / CBS 138)</name>
    <name type="common">Yeast</name>
    <name type="synonym">Nakaseomyces glabratus</name>
    <dbReference type="NCBI Taxonomy" id="284593"/>
    <lineage>
        <taxon>Eukaryota</taxon>
        <taxon>Fungi</taxon>
        <taxon>Dikarya</taxon>
        <taxon>Ascomycota</taxon>
        <taxon>Saccharomycotina</taxon>
        <taxon>Saccharomycetes</taxon>
        <taxon>Saccharomycetales</taxon>
        <taxon>Saccharomycetaceae</taxon>
        <taxon>Nakaseomyces</taxon>
    </lineage>
</organism>
<proteinExistence type="inferred from homology"/>
<protein>
    <recommendedName>
        <fullName>GrpE protein homolog, mitochondrial</fullName>
    </recommendedName>
</protein>
<dbReference type="EMBL" id="CR380956">
    <property type="protein sequence ID" value="CAG60821.1"/>
    <property type="molecule type" value="Genomic_DNA"/>
</dbReference>
<dbReference type="RefSeq" id="XP_447872.1">
    <property type="nucleotide sequence ID" value="XM_447872.1"/>
</dbReference>
<dbReference type="SMR" id="Q6FPH2"/>
<dbReference type="FunCoup" id="Q6FPH2">
    <property type="interactions" value="922"/>
</dbReference>
<dbReference type="STRING" id="284593.Q6FPH2"/>
<dbReference type="EnsemblFungi" id="CAGL0J03850g-T">
    <property type="protein sequence ID" value="CAGL0J03850g-T-p1"/>
    <property type="gene ID" value="CAGL0J03850g"/>
</dbReference>
<dbReference type="GeneID" id="2889659"/>
<dbReference type="KEGG" id="cgr:2889659"/>
<dbReference type="CGD" id="CAL0132866">
    <property type="gene designation" value="MGE1"/>
</dbReference>
<dbReference type="VEuPathDB" id="FungiDB:CAGL0J03850g"/>
<dbReference type="eggNOG" id="KOG3003">
    <property type="taxonomic scope" value="Eukaryota"/>
</dbReference>
<dbReference type="HOGENOM" id="CLU_057217_0_0_1"/>
<dbReference type="InParanoid" id="Q6FPH2"/>
<dbReference type="OMA" id="PHRHQAI"/>
<dbReference type="Proteomes" id="UP000002428">
    <property type="component" value="Chromosome J"/>
</dbReference>
<dbReference type="GO" id="GO:0001405">
    <property type="term" value="C:PAM complex, Tim23 associated import motor"/>
    <property type="evidence" value="ECO:0007669"/>
    <property type="project" value="EnsemblFungi"/>
</dbReference>
<dbReference type="GO" id="GO:0000774">
    <property type="term" value="F:adenyl-nucleotide exchange factor activity"/>
    <property type="evidence" value="ECO:0007669"/>
    <property type="project" value="EnsemblFungi"/>
</dbReference>
<dbReference type="GO" id="GO:0042803">
    <property type="term" value="F:protein homodimerization activity"/>
    <property type="evidence" value="ECO:0007669"/>
    <property type="project" value="InterPro"/>
</dbReference>
<dbReference type="GO" id="GO:0051087">
    <property type="term" value="F:protein-folding chaperone binding"/>
    <property type="evidence" value="ECO:0007669"/>
    <property type="project" value="InterPro"/>
</dbReference>
<dbReference type="GO" id="GO:0051082">
    <property type="term" value="F:unfolded protein binding"/>
    <property type="evidence" value="ECO:0007669"/>
    <property type="project" value="TreeGrafter"/>
</dbReference>
<dbReference type="GO" id="GO:0030150">
    <property type="term" value="P:protein import into mitochondrial matrix"/>
    <property type="evidence" value="ECO:0007669"/>
    <property type="project" value="EnsemblFungi"/>
</dbReference>
<dbReference type="GO" id="GO:0042026">
    <property type="term" value="P:protein refolding"/>
    <property type="evidence" value="ECO:0007669"/>
    <property type="project" value="EnsemblFungi"/>
</dbReference>
<dbReference type="CDD" id="cd00446">
    <property type="entry name" value="GrpE"/>
    <property type="match status" value="1"/>
</dbReference>
<dbReference type="FunFam" id="2.30.22.10:FF:000002">
    <property type="entry name" value="GrpE protein homolog"/>
    <property type="match status" value="1"/>
</dbReference>
<dbReference type="FunFam" id="3.90.20.20:FF:000011">
    <property type="entry name" value="GrpE protein homolog"/>
    <property type="match status" value="1"/>
</dbReference>
<dbReference type="Gene3D" id="3.90.20.20">
    <property type="match status" value="1"/>
</dbReference>
<dbReference type="Gene3D" id="2.30.22.10">
    <property type="entry name" value="Head domain of nucleotide exchange factor GrpE"/>
    <property type="match status" value="1"/>
</dbReference>
<dbReference type="HAMAP" id="MF_01151">
    <property type="entry name" value="GrpE"/>
    <property type="match status" value="1"/>
</dbReference>
<dbReference type="InterPro" id="IPR000740">
    <property type="entry name" value="GrpE"/>
</dbReference>
<dbReference type="InterPro" id="IPR013805">
    <property type="entry name" value="GrpE_coiled_coil"/>
</dbReference>
<dbReference type="InterPro" id="IPR009012">
    <property type="entry name" value="GrpE_head"/>
</dbReference>
<dbReference type="PANTHER" id="PTHR21237">
    <property type="entry name" value="GRPE PROTEIN"/>
    <property type="match status" value="1"/>
</dbReference>
<dbReference type="PANTHER" id="PTHR21237:SF23">
    <property type="entry name" value="GRPE PROTEIN HOMOLOG, MITOCHONDRIAL"/>
    <property type="match status" value="1"/>
</dbReference>
<dbReference type="Pfam" id="PF01025">
    <property type="entry name" value="GrpE"/>
    <property type="match status" value="1"/>
</dbReference>
<dbReference type="PRINTS" id="PR00773">
    <property type="entry name" value="GRPEPROTEIN"/>
</dbReference>
<dbReference type="SUPFAM" id="SSF58014">
    <property type="entry name" value="Coiled-coil domain of nucleotide exchange factor GrpE"/>
    <property type="match status" value="1"/>
</dbReference>
<dbReference type="SUPFAM" id="SSF51064">
    <property type="entry name" value="Head domain of nucleotide exchange factor GrpE"/>
    <property type="match status" value="1"/>
</dbReference>
<dbReference type="PROSITE" id="PS01071">
    <property type="entry name" value="GRPE"/>
    <property type="match status" value="1"/>
</dbReference>
<comment type="function">
    <text evidence="1">Essential component of the PAM complex, a complex required for the translocation of transit peptide-containing proteins from the inner membrane into the mitochondrial matrix in an ATP-dependent manner. Seems to control the nucleotide-dependent binding of SSC1 to substrate proteins (By similarity).</text>
</comment>
<comment type="subunit">
    <text evidence="1">Component of the PAM complex, at least composed of mtHsp70, MGE1, TIM44, PAM16, PAM17 and PAM18.</text>
</comment>
<comment type="subcellular location">
    <subcellularLocation>
        <location evidence="1">Mitochondrion matrix</location>
    </subcellularLocation>
</comment>
<comment type="similarity">
    <text evidence="4">Belongs to the GrpE family.</text>
</comment>
<evidence type="ECO:0000250" key="1"/>
<evidence type="ECO:0000255" key="2"/>
<evidence type="ECO:0000256" key="3">
    <source>
        <dbReference type="SAM" id="MobiDB-lite"/>
    </source>
</evidence>
<evidence type="ECO:0000305" key="4"/>
<accession>Q6FPH2</accession>
<keyword id="KW-0143">Chaperone</keyword>
<keyword id="KW-0496">Mitochondrion</keyword>
<keyword id="KW-1185">Reference proteome</keyword>
<keyword id="KW-0809">Transit peptide</keyword>
<feature type="transit peptide" description="Mitochondrion" evidence="2">
    <location>
        <begin position="1"/>
        <end status="unknown"/>
    </location>
</feature>
<feature type="chain" id="PRO_0000013041" description="GrpE protein homolog, mitochondrial">
    <location>
        <begin status="unknown"/>
        <end position="231"/>
    </location>
</feature>
<feature type="region of interest" description="Disordered" evidence="3">
    <location>
        <begin position="49"/>
        <end position="71"/>
    </location>
</feature>
<reference key="1">
    <citation type="journal article" date="2004" name="Nature">
        <title>Genome evolution in yeasts.</title>
        <authorList>
            <person name="Dujon B."/>
            <person name="Sherman D."/>
            <person name="Fischer G."/>
            <person name="Durrens P."/>
            <person name="Casaregola S."/>
            <person name="Lafontaine I."/>
            <person name="de Montigny J."/>
            <person name="Marck C."/>
            <person name="Neuveglise C."/>
            <person name="Talla E."/>
            <person name="Goffard N."/>
            <person name="Frangeul L."/>
            <person name="Aigle M."/>
            <person name="Anthouard V."/>
            <person name="Babour A."/>
            <person name="Barbe V."/>
            <person name="Barnay S."/>
            <person name="Blanchin S."/>
            <person name="Beckerich J.-M."/>
            <person name="Beyne E."/>
            <person name="Bleykasten C."/>
            <person name="Boisrame A."/>
            <person name="Boyer J."/>
            <person name="Cattolico L."/>
            <person name="Confanioleri F."/>
            <person name="de Daruvar A."/>
            <person name="Despons L."/>
            <person name="Fabre E."/>
            <person name="Fairhead C."/>
            <person name="Ferry-Dumazet H."/>
            <person name="Groppi A."/>
            <person name="Hantraye F."/>
            <person name="Hennequin C."/>
            <person name="Jauniaux N."/>
            <person name="Joyet P."/>
            <person name="Kachouri R."/>
            <person name="Kerrest A."/>
            <person name="Koszul R."/>
            <person name="Lemaire M."/>
            <person name="Lesur I."/>
            <person name="Ma L."/>
            <person name="Muller H."/>
            <person name="Nicaud J.-M."/>
            <person name="Nikolski M."/>
            <person name="Oztas S."/>
            <person name="Ozier-Kalogeropoulos O."/>
            <person name="Pellenz S."/>
            <person name="Potier S."/>
            <person name="Richard G.-F."/>
            <person name="Straub M.-L."/>
            <person name="Suleau A."/>
            <person name="Swennen D."/>
            <person name="Tekaia F."/>
            <person name="Wesolowski-Louvel M."/>
            <person name="Westhof E."/>
            <person name="Wirth B."/>
            <person name="Zeniou-Meyer M."/>
            <person name="Zivanovic Y."/>
            <person name="Bolotin-Fukuhara M."/>
            <person name="Thierry A."/>
            <person name="Bouchier C."/>
            <person name="Caudron B."/>
            <person name="Scarpelli C."/>
            <person name="Gaillardin C."/>
            <person name="Weissenbach J."/>
            <person name="Wincker P."/>
            <person name="Souciet J.-L."/>
        </authorList>
    </citation>
    <scope>NUCLEOTIDE SEQUENCE [LARGE SCALE GENOMIC DNA]</scope>
    <source>
        <strain>ATCC 2001 / BCRC 20586 / JCM 3761 / NBRC 0622 / NRRL Y-65 / CBS 138</strain>
    </source>
</reference>
<gene>
    <name type="primary">mge1</name>
    <name type="ordered locus">CAGL0J03850g</name>
</gene>
<sequence length="231" mass="26299">MRAFSNVSRISRVSRVSRVALAAPARTVPLMNRNAMSMMRFYSEDAKASEKAGEKAEEKAEEQNLSAEEQKLKDLQEQLDKKTKEAAELKDRLLRSVADFRNLQEVTKKDVEKAKSYALQKFAKDLLESVDNFGHALGAFKEEDLEKSKEISDLYTGVKMTRDVFEKTLKKYGIEKLDPLGERFDPNKHEATFELAQPDKEPGTVFHVQQLGYTLNERVIRPAKVGVVKED</sequence>